<evidence type="ECO:0000255" key="1"/>
<evidence type="ECO:0000269" key="2">
    <source>
    </source>
</evidence>
<evidence type="ECO:0000269" key="3">
    <source>
    </source>
</evidence>
<evidence type="ECO:0000269" key="4">
    <source>
    </source>
</evidence>
<evidence type="ECO:0000269" key="5">
    <source>
    </source>
</evidence>
<evidence type="ECO:0000305" key="6"/>
<name>VIRB2_BARHE</name>
<feature type="signal peptide" evidence="1">
    <location>
        <begin position="1"/>
        <end position="31"/>
    </location>
</feature>
<feature type="chain" id="PRO_0000273255" description="Type IV secretion system protein virB2">
    <location>
        <begin position="32"/>
        <end position="107"/>
    </location>
</feature>
<feature type="transmembrane region" description="Helical" evidence="1">
    <location>
        <begin position="49"/>
        <end position="71"/>
    </location>
</feature>
<feature type="transmembrane region" description="Helical" evidence="1">
    <location>
        <begin position="83"/>
        <end position="103"/>
    </location>
</feature>
<sequence length="107" mass="10962">MTDTISRNIIFIIIMLLLTALVVSDPSYAAAATGSASGLGNVDNVLQSIVTMMTGTTAKLIATICVAAVGIGWMYGFIDLRKAAYCLIGIGIVFGASALVSKLTSAS</sequence>
<comment type="function">
    <text evidence="3 5">The type IV secretion system VirB/VirD4 is a major virulence determinant for subversion of human endothelial cell (HEC) function. VirB-dependent changes of HEC include massive cytoskeletal rearrangements, a pro-inflammatory activation by nuclear factor NF-kappa-B, inhibition of early and late events of apoptosis, leading to an increased cell survival, and, at high infection doses, a cytostatic or cytotoxic effect, which interferes with a potent VirB-independent mitogenic activity. These changes of HEC require the T4S coupling protein VirD4 and at least one of the effector proteins BepA-G. VirB2 seems to constitute the major pilus component.</text>
</comment>
<comment type="subunit">
    <text evidence="4 6">Homooligomer (Potential). Interacts with the 17 kDa antigen protein that is encoded within the virB locus.</text>
</comment>
<comment type="subcellular location">
    <subcellularLocation>
        <location evidence="6">Cell outer membrane</location>
        <topology evidence="6">Multi-pass membrane protein</topology>
    </subcellularLocation>
</comment>
<comment type="induction">
    <text evidence="2">During the interaction with the intracellular environment of host cells.</text>
</comment>
<comment type="similarity">
    <text evidence="6">Belongs to the virB2 family.</text>
</comment>
<dbReference type="EMBL" id="U23447">
    <property type="protein sequence ID" value="AAD48919.1"/>
    <property type="molecule type" value="Genomic_DNA"/>
</dbReference>
<dbReference type="EMBL" id="AF182718">
    <property type="protein sequence ID" value="AAF00940.1"/>
    <property type="molecule type" value="Genomic_DNA"/>
</dbReference>
<dbReference type="EMBL" id="BX897699">
    <property type="protein sequence ID" value="CAF28099.1"/>
    <property type="molecule type" value="Genomic_DNA"/>
</dbReference>
<dbReference type="RefSeq" id="WP_011181127.1">
    <property type="nucleotide sequence ID" value="NZ_LRIJ02000001.1"/>
</dbReference>
<dbReference type="SMR" id="Q9R3F2"/>
<dbReference type="PaxDb" id="283166-BH13260"/>
<dbReference type="EnsemblBacteria" id="CAF28099">
    <property type="protein sequence ID" value="CAF28099"/>
    <property type="gene ID" value="BH13260"/>
</dbReference>
<dbReference type="GeneID" id="92985937"/>
<dbReference type="KEGG" id="bhe:BH13260"/>
<dbReference type="eggNOG" id="COG3838">
    <property type="taxonomic scope" value="Bacteria"/>
</dbReference>
<dbReference type="OrthoDB" id="7211121at2"/>
<dbReference type="Proteomes" id="UP000000421">
    <property type="component" value="Chromosome"/>
</dbReference>
<dbReference type="GO" id="GO:0009279">
    <property type="term" value="C:cell outer membrane"/>
    <property type="evidence" value="ECO:0007669"/>
    <property type="project" value="UniProtKB-SubCell"/>
</dbReference>
<dbReference type="InterPro" id="IPR007039">
    <property type="entry name" value="TrbC/VirB2"/>
</dbReference>
<dbReference type="Pfam" id="PF04956">
    <property type="entry name" value="TrbC"/>
    <property type="match status" value="1"/>
</dbReference>
<keyword id="KW-0998">Cell outer membrane</keyword>
<keyword id="KW-0472">Membrane</keyword>
<keyword id="KW-0732">Signal</keyword>
<keyword id="KW-0812">Transmembrane</keyword>
<keyword id="KW-1133">Transmembrane helix</keyword>
<keyword id="KW-0813">Transport</keyword>
<keyword id="KW-0843">Virulence</keyword>
<organism>
    <name type="scientific">Bartonella henselae (strain ATCC 49882 / DSM 28221 / CCUG 30454 / Houston 1)</name>
    <name type="common">Rochalimaea henselae</name>
    <dbReference type="NCBI Taxonomy" id="283166"/>
    <lineage>
        <taxon>Bacteria</taxon>
        <taxon>Pseudomonadati</taxon>
        <taxon>Pseudomonadota</taxon>
        <taxon>Alphaproteobacteria</taxon>
        <taxon>Hyphomicrobiales</taxon>
        <taxon>Bartonellaceae</taxon>
        <taxon>Bartonella</taxon>
    </lineage>
</organism>
<accession>Q9R3F2</accession>
<protein>
    <recommendedName>
        <fullName>Type IV secretion system protein virB2</fullName>
    </recommendedName>
</protein>
<proteinExistence type="evidence at protein level"/>
<reference key="1">
    <citation type="journal article" date="2000" name="DNA Cell Biol.">
        <title>Cloning, sequencing, and expression of three Bartonella henselae genes homologous to the Agrobacterium tumefaciens VirB region.</title>
        <authorList>
            <person name="Schmiederer M."/>
            <person name="Anderson B.E."/>
        </authorList>
    </citation>
    <scope>NUCLEOTIDE SEQUENCE [GENOMIC DNA]</scope>
    <source>
        <strain>ATCC 49882 / DSM 28221 / CCUG 30454 / Houston 1</strain>
    </source>
</reference>
<reference key="2">
    <citation type="journal article" date="2000" name="DNA Cell Biol.">
        <title>The gene encoding the 17-kDa antigen of Bartonella henselae is located within a cluster of genes homologous to the virB virulence operon.</title>
        <authorList>
            <person name="Padmalayam I."/>
            <person name="Karem K."/>
            <person name="Baumstark B.R."/>
            <person name="Massung R."/>
        </authorList>
    </citation>
    <scope>NUCLEOTIDE SEQUENCE [GENOMIC DNA]</scope>
    <source>
        <strain>ATCC 49882 / DSM 28221 / CCUG 30454 / Houston 1</strain>
    </source>
</reference>
<reference key="3">
    <citation type="journal article" date="2004" name="Proc. Natl. Acad. Sci. U.S.A.">
        <title>The louse-borne human pathogen Bartonella quintana is a genomic derivative of the zoonotic agent Bartonella henselae.</title>
        <authorList>
            <person name="Alsmark U.C.M."/>
            <person name="Frank A.C."/>
            <person name="Karlberg E.O."/>
            <person name="Legault B.-A."/>
            <person name="Ardell D.H."/>
            <person name="Canbaeck B."/>
            <person name="Eriksson A.-S."/>
            <person name="Naeslund A.K."/>
            <person name="Handley S.A."/>
            <person name="Huvet M."/>
            <person name="La Scola B."/>
            <person name="Holmberg M."/>
            <person name="Andersson S.G.E."/>
        </authorList>
    </citation>
    <scope>NUCLEOTIDE SEQUENCE [LARGE SCALE GENOMIC DNA]</scope>
    <source>
        <strain>ATCC 49882 / DSM 28221 / CCUG 30454 / Houston 1</strain>
    </source>
</reference>
<reference key="4">
    <citation type="journal article" date="2001" name="Infect. Immun.">
        <title>Intracellular induction of the Bartonella henselae virB operon by human endothelial cells.</title>
        <authorList>
            <person name="Schmiederer M."/>
            <person name="Arcenas R."/>
            <person name="Widen R."/>
            <person name="Valkov N."/>
            <person name="Anderson B.E."/>
        </authorList>
    </citation>
    <scope>INDUCTION</scope>
    <source>
        <strain>ATCC 49882 / DSM 28221 / CCUG 30454 / Houston 1</strain>
    </source>
</reference>
<reference key="5">
    <citation type="journal article" date="2004" name="J. Bacteriol.">
        <title>Interaction between protein subunits of the type IV secretion system of Bartonella henselae.</title>
        <authorList>
            <person name="Shamaei-Tousi A."/>
            <person name="Cahill R."/>
            <person name="Frankel G."/>
        </authorList>
    </citation>
    <scope>INTERACTION WITH 17 KDA ANTIGEN PROTEIN</scope>
</reference>
<reference key="6">
    <citation type="journal article" date="2004" name="Mol. Microbiol.">
        <title>The VirB type IV secretion system of Bartonella henselae mediates invasion, proinflammatory activation and antiapoptotic protection of endothelial cells.</title>
        <authorList>
            <person name="Schmid M.C."/>
            <person name="Schulein R."/>
            <person name="Dehio M."/>
            <person name="Denecker G."/>
            <person name="Carena I."/>
            <person name="Dehio C."/>
        </authorList>
    </citation>
    <scope>FUNCTION</scope>
    <source>
        <strain>ATCC 49882 / DSM 28221 / CCUG 30454 / Houston 1</strain>
    </source>
</reference>
<reference key="7">
    <citation type="journal article" date="2005" name="Proc. Natl. Acad. Sci. U.S.A.">
        <title>A bipartite signal mediates the transfer of type IV secretion substrates of Bartonella henselae into human cells.</title>
        <authorList>
            <person name="Schulein R."/>
            <person name="Guye P."/>
            <person name="Rhomberg T.A."/>
            <person name="Schmid M.C."/>
            <person name="Schroeder G."/>
            <person name="Vergunst A.C."/>
            <person name="Carena I."/>
            <person name="Dehio C."/>
        </authorList>
    </citation>
    <scope>FUNCTION</scope>
    <source>
        <strain>ATCC 49882 / DSM 28221 / CCUG 30454 / Houston 1</strain>
    </source>
</reference>
<gene>
    <name type="primary">virB2</name>
    <name type="ordered locus">BH13260</name>
</gene>